<protein>
    <recommendedName>
        <fullName evidence="9">Binder of sperm protein homolog 2</fullName>
    </recommendedName>
</protein>
<gene>
    <name evidence="9" type="primary">Bsph2</name>
</gene>
<keyword id="KW-1015">Disulfide bond</keyword>
<keyword id="KW-1185">Reference proteome</keyword>
<keyword id="KW-0677">Repeat</keyword>
<keyword id="KW-0964">Secreted</keyword>
<keyword id="KW-0732">Signal</keyword>
<name>BSPH2_MOUSE</name>
<comment type="function">
    <text evidence="3">Binds sperm in vitro but has no effect on sperm capacitation. Also binds gelatin and heparin, but not chondroitin sulfate B or phospholipid liposomes.</text>
</comment>
<comment type="subcellular location">
    <subcellularLocation>
        <location evidence="5">Secreted</location>
    </subcellularLocation>
</comment>
<comment type="tissue specificity">
    <text evidence="4">Epididymis.</text>
</comment>
<comment type="similarity">
    <text evidence="5">Belongs to the seminal plasma protein family.</text>
</comment>
<sequence length="131" mass="15641">MEVMSHLVHWVFLAVYMYELNAELISHLHPPEQEISTDSCVFPFVYADGFHYSCISLHSDYDWCSLDFQFQGRWRYCTAQDPPKCIFPFQFKQKLIKKCTKEGYILNRSWCSLTENYNQDGKWKQCSPNNF</sequence>
<dbReference type="EMBL" id="DQ227499">
    <property type="protein sequence ID" value="ABB71593.1"/>
    <property type="molecule type" value="mRNA"/>
</dbReference>
<dbReference type="EMBL" id="DQ664198">
    <property type="protein sequence ID" value="ABG65679.1"/>
    <property type="molecule type" value="mRNA"/>
</dbReference>
<dbReference type="EMBL" id="AC120846">
    <property type="status" value="NOT_ANNOTATED_CDS"/>
    <property type="molecule type" value="Genomic_DNA"/>
</dbReference>
<dbReference type="CCDS" id="CCDS52028.1"/>
<dbReference type="RefSeq" id="NP_001074411.1">
    <property type="nucleotide sequence ID" value="NM_001080942.2"/>
</dbReference>
<dbReference type="SMR" id="Q0Q236"/>
<dbReference type="FunCoup" id="Q0Q236">
    <property type="interactions" value="8"/>
</dbReference>
<dbReference type="STRING" id="10090.ENSMUSP00000104166"/>
<dbReference type="PaxDb" id="10090-ENSMUSP00000104166"/>
<dbReference type="ProteomicsDB" id="273775"/>
<dbReference type="Ensembl" id="ENSMUST00000108526.6">
    <property type="protein sequence ID" value="ENSMUSP00000104166.3"/>
    <property type="gene ID" value="ENSMUSG00000078800.6"/>
</dbReference>
<dbReference type="GeneID" id="77684"/>
<dbReference type="KEGG" id="mmu:77684"/>
<dbReference type="UCSC" id="uc009ffx.1">
    <property type="organism name" value="mouse"/>
</dbReference>
<dbReference type="AGR" id="MGI:1924934"/>
<dbReference type="CTD" id="77684"/>
<dbReference type="MGI" id="MGI:1924934">
    <property type="gene designation" value="Bsph2"/>
</dbReference>
<dbReference type="VEuPathDB" id="HostDB:ENSMUSG00000078800"/>
<dbReference type="eggNOG" id="KOG1565">
    <property type="taxonomic scope" value="Eukaryota"/>
</dbReference>
<dbReference type="GeneTree" id="ENSGT00940000163805"/>
<dbReference type="HOGENOM" id="CLU_126630_1_0_1"/>
<dbReference type="InParanoid" id="Q0Q236"/>
<dbReference type="OMA" id="FQGRWRY"/>
<dbReference type="OrthoDB" id="406838at2759"/>
<dbReference type="PhylomeDB" id="Q0Q236"/>
<dbReference type="TreeFam" id="TF343543"/>
<dbReference type="BioGRID-ORCS" id="77684">
    <property type="hits" value="1 hit in 76 CRISPR screens"/>
</dbReference>
<dbReference type="PRO" id="PR:Q0Q236"/>
<dbReference type="Proteomes" id="UP000000589">
    <property type="component" value="Chromosome 7"/>
</dbReference>
<dbReference type="RNAct" id="Q0Q236">
    <property type="molecule type" value="protein"/>
</dbReference>
<dbReference type="Bgee" id="ENSMUSG00000078800">
    <property type="expression patterns" value="Expressed in yolk sac and 6 other cell types or tissues"/>
</dbReference>
<dbReference type="ExpressionAtlas" id="Q0Q236">
    <property type="expression patterns" value="baseline and differential"/>
</dbReference>
<dbReference type="GO" id="GO:0005576">
    <property type="term" value="C:extracellular region"/>
    <property type="evidence" value="ECO:0007669"/>
    <property type="project" value="UniProtKB-SubCell"/>
</dbReference>
<dbReference type="GO" id="GO:0008201">
    <property type="term" value="F:heparin binding"/>
    <property type="evidence" value="ECO:0000314"/>
    <property type="project" value="MGI"/>
</dbReference>
<dbReference type="CDD" id="cd00062">
    <property type="entry name" value="FN2"/>
    <property type="match status" value="1"/>
</dbReference>
<dbReference type="FunFam" id="2.10.10.10:FF:000015">
    <property type="entry name" value="Binder of sperm protein homolog 2"/>
    <property type="match status" value="1"/>
</dbReference>
<dbReference type="FunFam" id="2.10.10.10:FF:000005">
    <property type="entry name" value="Epididymal sperm binding protein 1"/>
    <property type="match status" value="1"/>
</dbReference>
<dbReference type="Gene3D" id="2.10.10.10">
    <property type="entry name" value="Fibronectin, type II, collagen-binding"/>
    <property type="match status" value="2"/>
</dbReference>
<dbReference type="InterPro" id="IPR000562">
    <property type="entry name" value="FN_type2_dom"/>
</dbReference>
<dbReference type="InterPro" id="IPR036943">
    <property type="entry name" value="FN_type2_sf"/>
</dbReference>
<dbReference type="InterPro" id="IPR013806">
    <property type="entry name" value="Kringle-like"/>
</dbReference>
<dbReference type="InterPro" id="IPR051666">
    <property type="entry name" value="SP_Capacitation_Regulator"/>
</dbReference>
<dbReference type="PANTHER" id="PTHR22918:SF5">
    <property type="entry name" value="BINDER OF SPERM PROTEIN HOMOLOG 2"/>
    <property type="match status" value="1"/>
</dbReference>
<dbReference type="PANTHER" id="PTHR22918">
    <property type="entry name" value="SEMINAL PLASMA PROTEIN"/>
    <property type="match status" value="1"/>
</dbReference>
<dbReference type="Pfam" id="PF00040">
    <property type="entry name" value="fn2"/>
    <property type="match status" value="2"/>
</dbReference>
<dbReference type="SMART" id="SM00059">
    <property type="entry name" value="FN2"/>
    <property type="match status" value="2"/>
</dbReference>
<dbReference type="SUPFAM" id="SSF57440">
    <property type="entry name" value="Kringle-like"/>
    <property type="match status" value="2"/>
</dbReference>
<dbReference type="PROSITE" id="PS51092">
    <property type="entry name" value="FN2_2"/>
    <property type="match status" value="2"/>
</dbReference>
<proteinExistence type="evidence at transcript level"/>
<evidence type="ECO:0000255" key="1"/>
<evidence type="ECO:0000255" key="2">
    <source>
        <dbReference type="PROSITE-ProRule" id="PRU00479"/>
    </source>
</evidence>
<evidence type="ECO:0000269" key="3">
    <source>
    </source>
</evidence>
<evidence type="ECO:0000269" key="4">
    <source ref="2"/>
</evidence>
<evidence type="ECO:0000305" key="5"/>
<evidence type="ECO:0000312" key="6">
    <source>
        <dbReference type="EMBL" id="ABB71593.1"/>
    </source>
</evidence>
<evidence type="ECO:0000312" key="7">
    <source>
        <dbReference type="EMBL" id="ABG65679.1"/>
    </source>
</evidence>
<evidence type="ECO:0000312" key="8">
    <source>
        <dbReference type="EMBL" id="AC120846"/>
    </source>
</evidence>
<evidence type="ECO:0000312" key="9">
    <source>
        <dbReference type="MGI" id="MGI:1924934"/>
    </source>
</evidence>
<organism>
    <name type="scientific">Mus musculus</name>
    <name type="common">Mouse</name>
    <dbReference type="NCBI Taxonomy" id="10090"/>
    <lineage>
        <taxon>Eukaryota</taxon>
        <taxon>Metazoa</taxon>
        <taxon>Chordata</taxon>
        <taxon>Craniata</taxon>
        <taxon>Vertebrata</taxon>
        <taxon>Euteleostomi</taxon>
        <taxon>Mammalia</taxon>
        <taxon>Eutheria</taxon>
        <taxon>Euarchontoglires</taxon>
        <taxon>Glires</taxon>
        <taxon>Rodentia</taxon>
        <taxon>Myomorpha</taxon>
        <taxon>Muroidea</taxon>
        <taxon>Muridae</taxon>
        <taxon>Murinae</taxon>
        <taxon>Mus</taxon>
        <taxon>Mus</taxon>
    </lineage>
</organism>
<accession>Q0Q236</accession>
<reference evidence="6" key="1">
    <citation type="journal article" date="2007" name="Mol. Hum. Reprod.">
        <title>Genomic structure and tissue-specific expression of human and mouse genes encoding homologues of the major bovine seminal plasma proteins.</title>
        <authorList>
            <person name="Lefebvre J."/>
            <person name="Fan J."/>
            <person name="Chevalier S."/>
            <person name="Sullivan R."/>
            <person name="Carmona E."/>
            <person name="Manjunath P."/>
        </authorList>
    </citation>
    <scope>NUCLEOTIDE SEQUENCE [MRNA]</scope>
    <scope>TISSUE SPECIFICITY</scope>
    <source>
        <strain evidence="6">CD-1</strain>
        <tissue evidence="6">Epididymis</tissue>
    </source>
</reference>
<reference evidence="7" key="2">
    <citation type="submission" date="2006-05" db="EMBL/GenBank/DDBJ databases">
        <title>Identification and characterization of novel genes expressed in epididymis.</title>
        <authorList>
            <person name="Oh J."/>
            <person name="Cho C."/>
        </authorList>
    </citation>
    <scope>NUCLEOTIDE SEQUENCE [MRNA]</scope>
    <source>
        <strain evidence="7">ICR</strain>
        <tissue evidence="7">Epididymis</tissue>
    </source>
</reference>
<reference evidence="8" key="3">
    <citation type="journal article" date="2009" name="PLoS Biol.">
        <title>Lineage-specific biology revealed by a finished genome assembly of the mouse.</title>
        <authorList>
            <person name="Church D.M."/>
            <person name="Goodstadt L."/>
            <person name="Hillier L.W."/>
            <person name="Zody M.C."/>
            <person name="Goldstein S."/>
            <person name="She X."/>
            <person name="Bult C.J."/>
            <person name="Agarwala R."/>
            <person name="Cherry J.L."/>
            <person name="DiCuccio M."/>
            <person name="Hlavina W."/>
            <person name="Kapustin Y."/>
            <person name="Meric P."/>
            <person name="Maglott D."/>
            <person name="Birtle Z."/>
            <person name="Marques A.C."/>
            <person name="Graves T."/>
            <person name="Zhou S."/>
            <person name="Teague B."/>
            <person name="Potamousis K."/>
            <person name="Churas C."/>
            <person name="Place M."/>
            <person name="Herschleb J."/>
            <person name="Runnheim R."/>
            <person name="Forrest D."/>
            <person name="Amos-Landgraf J."/>
            <person name="Schwartz D.C."/>
            <person name="Cheng Z."/>
            <person name="Lindblad-Toh K."/>
            <person name="Eichler E.E."/>
            <person name="Ponting C.P."/>
        </authorList>
    </citation>
    <scope>NUCLEOTIDE SEQUENCE [LARGE SCALE GENOMIC DNA]</scope>
    <source>
        <strain>C57BL/6J</strain>
    </source>
</reference>
<reference evidence="5" key="4">
    <citation type="journal article" date="2014" name="Biol. Reprod.">
        <title>Murine Binder of SPerm homolog 2 (BSPH2): the black sheep of the BSP superfamily.</title>
        <authorList>
            <person name="Plante G."/>
            <person name="Fan J."/>
            <person name="Manjunath P."/>
        </authorList>
    </citation>
    <scope>FUNCTION</scope>
</reference>
<feature type="signal peptide" evidence="1">
    <location>
        <begin position="1"/>
        <end position="22"/>
    </location>
</feature>
<feature type="chain" id="PRO_5004175719" description="Binder of sperm protein homolog 2">
    <location>
        <begin position="23"/>
        <end position="131"/>
    </location>
</feature>
<feature type="domain" description="Fibronectin type-II 1" evidence="2">
    <location>
        <begin position="35"/>
        <end position="79"/>
    </location>
</feature>
<feature type="domain" description="Fibronectin type-II 2" evidence="2">
    <location>
        <begin position="80"/>
        <end position="128"/>
    </location>
</feature>
<feature type="disulfide bond" evidence="2">
    <location>
        <begin position="40"/>
        <end position="64"/>
    </location>
</feature>
<feature type="disulfide bond" evidence="2">
    <location>
        <begin position="54"/>
        <end position="77"/>
    </location>
</feature>
<feature type="disulfide bond" evidence="2">
    <location>
        <begin position="85"/>
        <end position="111"/>
    </location>
</feature>
<feature type="disulfide bond" evidence="2">
    <location>
        <begin position="99"/>
        <end position="126"/>
    </location>
</feature>